<keyword id="KW-1185">Reference proteome</keyword>
<keyword id="KW-1277">Toxin-antitoxin system</keyword>
<organism>
    <name type="scientific">Caulobacter vibrioides (strain ATCC 19089 / CIP 103742 / CB 15)</name>
    <name type="common">Caulobacter crescentus</name>
    <dbReference type="NCBI Taxonomy" id="190650"/>
    <lineage>
        <taxon>Bacteria</taxon>
        <taxon>Pseudomonadati</taxon>
        <taxon>Pseudomonadota</taxon>
        <taxon>Alphaproteobacteria</taxon>
        <taxon>Caulobacterales</taxon>
        <taxon>Caulobacteraceae</taxon>
        <taxon>Caulobacter</taxon>
    </lineage>
</organism>
<proteinExistence type="evidence at protein level"/>
<reference key="1">
    <citation type="journal article" date="2001" name="Proc. Natl. Acad. Sci. U.S.A.">
        <title>Complete genome sequence of Caulobacter crescentus.</title>
        <authorList>
            <person name="Nierman W.C."/>
            <person name="Feldblyum T.V."/>
            <person name="Laub M.T."/>
            <person name="Paulsen I.T."/>
            <person name="Nelson K.E."/>
            <person name="Eisen J.A."/>
            <person name="Heidelberg J.F."/>
            <person name="Alley M.R.K."/>
            <person name="Ohta N."/>
            <person name="Maddock J.R."/>
            <person name="Potocka I."/>
            <person name="Nelson W.C."/>
            <person name="Newton A."/>
            <person name="Stephens C."/>
            <person name="Phadke N.D."/>
            <person name="Ely B."/>
            <person name="DeBoy R.T."/>
            <person name="Dodson R.J."/>
            <person name="Durkin A.S."/>
            <person name="Gwinn M.L."/>
            <person name="Haft D.H."/>
            <person name="Kolonay J.F."/>
            <person name="Smit J."/>
            <person name="Craven M.B."/>
            <person name="Khouri H.M."/>
            <person name="Shetty J."/>
            <person name="Berry K.J."/>
            <person name="Utterback T.R."/>
            <person name="Tran K."/>
            <person name="Wolf A.M."/>
            <person name="Vamathevan J.J."/>
            <person name="Ermolaeva M.D."/>
            <person name="White O."/>
            <person name="Salzberg S.L."/>
            <person name="Venter J.C."/>
            <person name="Shapiro L."/>
            <person name="Fraser C.M."/>
        </authorList>
    </citation>
    <scope>NUCLEOTIDE SEQUENCE [LARGE SCALE GENOMIC DNA]</scope>
    <source>
        <strain>ATCC 19089 / CIP 103742 / CB 15</strain>
    </source>
</reference>
<reference key="2">
    <citation type="journal article" date="2005" name="Nucleic Acids Res.">
        <title>Toxin-antitoxin loci are highly abundant in free-living but lost from host-associated prokaryotes.</title>
        <authorList>
            <person name="Pandey D.P."/>
            <person name="Gerdes K."/>
        </authorList>
    </citation>
    <scope>POSSIBLE FUNCTION</scope>
    <source>
        <strain>ATCC 19089 / CIP 103742 / CB 15</strain>
    </source>
</reference>
<reference key="3">
    <citation type="journal article" date="2010" name="Mol. Microbiol.">
        <title>Interaction specificity, toxicity and regulation of a paralogous set of ParE/RelE-family toxin-antitoxin systems.</title>
        <authorList>
            <person name="Fiebig A."/>
            <person name="Castro Rojas C.M."/>
            <person name="Siegal-Gaskins D."/>
            <person name="Crosson S."/>
        </authorList>
    </citation>
    <scope>FUNCTION AS AN ANTITOXIN</scope>
    <scope>DISRUPTION PHENOTYPE</scope>
    <source>
        <strain>ATCC 19089 / CIP 103742 / CB 15</strain>
    </source>
</reference>
<protein>
    <recommendedName>
        <fullName>Antitoxin RelB2</fullName>
    </recommendedName>
</protein>
<gene>
    <name type="primary">relB2</name>
    <name type="ordered locus">CC_2514</name>
</gene>
<dbReference type="EMBL" id="AE005673">
    <property type="protein sequence ID" value="AAK24485.1"/>
    <property type="molecule type" value="Genomic_DNA"/>
</dbReference>
<dbReference type="PIR" id="A87561">
    <property type="entry name" value="A87561"/>
</dbReference>
<dbReference type="RefSeq" id="NP_421317.1">
    <property type="nucleotide sequence ID" value="NC_002696.2"/>
</dbReference>
<dbReference type="SMR" id="Q9A5D6"/>
<dbReference type="STRING" id="190650.CC_2514"/>
<dbReference type="EnsemblBacteria" id="AAK24485">
    <property type="protein sequence ID" value="AAK24485"/>
    <property type="gene ID" value="CC_2514"/>
</dbReference>
<dbReference type="KEGG" id="ccr:CC_2514"/>
<dbReference type="PATRIC" id="fig|190650.5.peg.2530"/>
<dbReference type="eggNOG" id="COG3905">
    <property type="taxonomic scope" value="Bacteria"/>
</dbReference>
<dbReference type="HOGENOM" id="CLU_210162_0_0_5"/>
<dbReference type="BioCyc" id="CAULO:CC2514-MONOMER"/>
<dbReference type="Proteomes" id="UP000001816">
    <property type="component" value="Chromosome"/>
</dbReference>
<comment type="function">
    <text evidence="1">Antitoxin component of a type II toxin-antitoxin (TA) system. Neutralizes the effect of cognate toxin RelE2, but no other RelE or ParE toxin.</text>
</comment>
<comment type="disruption phenotype">
    <text evidence="1">Cannot be disrupted, suggesting it is a functional antitoxin. No visible phenotype when the relBE2 operon is deleted.</text>
</comment>
<feature type="chain" id="PRO_0000408465" description="Antitoxin RelB2">
    <location>
        <begin position="1"/>
        <end position="66"/>
    </location>
</feature>
<evidence type="ECO:0000269" key="1">
    <source>
    </source>
</evidence>
<name>RELB2_CAUVC</name>
<sequence>MAICYARFMVPEPSIFEIDAEAEEAADAEGMADIAAGRVVPHEEVSAWLDTWGTPEEKPAPETWRK</sequence>
<accession>Q9A5D6</accession>